<gene>
    <name type="primary">ND2</name>
</gene>
<comment type="function">
    <text evidence="1">Core subunit of the mitochondrial membrane respiratory chain NADH dehydrogenase (Complex I) that is believed to belong to the minimal assembly required for catalysis. Complex I functions in the transfer of electrons from NADH to the respiratory chain. The immediate electron acceptor for the enzyme is believed to be ubiquinone (By similarity).</text>
</comment>
<comment type="catalytic activity">
    <reaction>
        <text>a ubiquinone + NADH + 5 H(+)(in) = a ubiquinol + NAD(+) + 4 H(+)(out)</text>
        <dbReference type="Rhea" id="RHEA:29091"/>
        <dbReference type="Rhea" id="RHEA-COMP:9565"/>
        <dbReference type="Rhea" id="RHEA-COMP:9566"/>
        <dbReference type="ChEBI" id="CHEBI:15378"/>
        <dbReference type="ChEBI" id="CHEBI:16389"/>
        <dbReference type="ChEBI" id="CHEBI:17976"/>
        <dbReference type="ChEBI" id="CHEBI:57540"/>
        <dbReference type="ChEBI" id="CHEBI:57945"/>
        <dbReference type="EC" id="7.1.1.2"/>
    </reaction>
</comment>
<comment type="subcellular location">
    <subcellularLocation>
        <location>Mitochondrion inner membrane</location>
        <topology>Multi-pass membrane protein</topology>
    </subcellularLocation>
</comment>
<comment type="similarity">
    <text evidence="3">Belongs to the complex I subunit 2 family.</text>
</comment>
<accession>Q36426</accession>
<geneLocation type="mitochondrion"/>
<organism>
    <name type="scientific">Locusta migratoria</name>
    <name type="common">Migratory locust</name>
    <dbReference type="NCBI Taxonomy" id="7004"/>
    <lineage>
        <taxon>Eukaryota</taxon>
        <taxon>Metazoa</taxon>
        <taxon>Ecdysozoa</taxon>
        <taxon>Arthropoda</taxon>
        <taxon>Hexapoda</taxon>
        <taxon>Insecta</taxon>
        <taxon>Pterygota</taxon>
        <taxon>Neoptera</taxon>
        <taxon>Polyneoptera</taxon>
        <taxon>Orthoptera</taxon>
        <taxon>Caelifera</taxon>
        <taxon>Acrididea</taxon>
        <taxon>Acridomorpha</taxon>
        <taxon>Acridoidea</taxon>
        <taxon>Acrididae</taxon>
        <taxon>Oedipodinae</taxon>
        <taxon>Locusta</taxon>
    </lineage>
</organism>
<sequence length="342" mass="39340">MYNNSMKLLFLSSLMMGTYLSISSTPWLGTWMGLEINLLSIIPMLTDNKNSMINEPAIKYFIIQSMASTMLLISILIIQMKYMMWWDNKNIPSMMIMSSMMMKMGAAPFHFWLPEVMSSTSWINCLMLMTWQKIAPMMTMSYCIKMSSFLFVVIMMGIIVGAMGGLNQTSLRQILAYSSISHLGWMISSMTISENTWEFYFLIYSTLNVIIIFMFKTMNLFFLNQIYSASYFKTEIKFMMMTSLLSLGGLPPMLGFLPKWIVMQSLIDNKMTALVLLMITFTTITLYYYMRISFSAIIMLHNENSWLTSIKMNKLVVALPILSMISTMGLICTSNFMLLLSS</sequence>
<protein>
    <recommendedName>
        <fullName>NADH-ubiquinone oxidoreductase chain 2</fullName>
        <ecNumber>7.1.1.2</ecNumber>
    </recommendedName>
    <alternativeName>
        <fullName>NADH dehydrogenase subunit 2</fullName>
    </alternativeName>
</protein>
<dbReference type="EC" id="7.1.1.2"/>
<dbReference type="EMBL" id="X80245">
    <property type="protein sequence ID" value="CAA56536.1"/>
    <property type="molecule type" value="Genomic_DNA"/>
</dbReference>
<dbReference type="PIR" id="T11476">
    <property type="entry name" value="T11476"/>
</dbReference>
<dbReference type="RefSeq" id="NP_007290.1">
    <property type="nucleotide sequence ID" value="NC_001712.1"/>
</dbReference>
<dbReference type="SMR" id="Q36426"/>
<dbReference type="GeneID" id="807964"/>
<dbReference type="CTD" id="4536"/>
<dbReference type="GO" id="GO:0005743">
    <property type="term" value="C:mitochondrial inner membrane"/>
    <property type="evidence" value="ECO:0007669"/>
    <property type="project" value="UniProtKB-SubCell"/>
</dbReference>
<dbReference type="GO" id="GO:0008137">
    <property type="term" value="F:NADH dehydrogenase (ubiquinone) activity"/>
    <property type="evidence" value="ECO:0007669"/>
    <property type="project" value="UniProtKB-EC"/>
</dbReference>
<dbReference type="GO" id="GO:0006120">
    <property type="term" value="P:mitochondrial electron transport, NADH to ubiquinone"/>
    <property type="evidence" value="ECO:0007669"/>
    <property type="project" value="InterPro"/>
</dbReference>
<dbReference type="InterPro" id="IPR050175">
    <property type="entry name" value="Complex_I_Subunit_2"/>
</dbReference>
<dbReference type="InterPro" id="IPR010933">
    <property type="entry name" value="NADH_DH_su2_C"/>
</dbReference>
<dbReference type="InterPro" id="IPR003917">
    <property type="entry name" value="NADH_UbQ_OxRdtase_chain2"/>
</dbReference>
<dbReference type="InterPro" id="IPR001750">
    <property type="entry name" value="ND/Mrp_TM"/>
</dbReference>
<dbReference type="PANTHER" id="PTHR46552">
    <property type="entry name" value="NADH-UBIQUINONE OXIDOREDUCTASE CHAIN 2"/>
    <property type="match status" value="1"/>
</dbReference>
<dbReference type="PANTHER" id="PTHR46552:SF1">
    <property type="entry name" value="NADH-UBIQUINONE OXIDOREDUCTASE CHAIN 2"/>
    <property type="match status" value="1"/>
</dbReference>
<dbReference type="Pfam" id="PF06444">
    <property type="entry name" value="NADH_dehy_S2_C"/>
    <property type="match status" value="1"/>
</dbReference>
<dbReference type="Pfam" id="PF00361">
    <property type="entry name" value="Proton_antipo_M"/>
    <property type="match status" value="1"/>
</dbReference>
<dbReference type="PRINTS" id="PR01436">
    <property type="entry name" value="NADHDHGNASE2"/>
</dbReference>
<keyword id="KW-0249">Electron transport</keyword>
<keyword id="KW-0472">Membrane</keyword>
<keyword id="KW-0496">Mitochondrion</keyword>
<keyword id="KW-0999">Mitochondrion inner membrane</keyword>
<keyword id="KW-0520">NAD</keyword>
<keyword id="KW-0679">Respiratory chain</keyword>
<keyword id="KW-1278">Translocase</keyword>
<keyword id="KW-0812">Transmembrane</keyword>
<keyword id="KW-1133">Transmembrane helix</keyword>
<keyword id="KW-0813">Transport</keyword>
<keyword id="KW-0830">Ubiquinone</keyword>
<proteinExistence type="inferred from homology"/>
<evidence type="ECO:0000250" key="1"/>
<evidence type="ECO:0000255" key="2"/>
<evidence type="ECO:0000305" key="3"/>
<feature type="chain" id="PRO_0000117601" description="NADH-ubiquinone oxidoreductase chain 2">
    <location>
        <begin position="1"/>
        <end position="342"/>
    </location>
</feature>
<feature type="transmembrane region" description="Helical" evidence="2">
    <location>
        <begin position="25"/>
        <end position="45"/>
    </location>
</feature>
<feature type="transmembrane region" description="Helical" evidence="2">
    <location>
        <begin position="58"/>
        <end position="78"/>
    </location>
</feature>
<feature type="transmembrane region" description="Helical" evidence="2">
    <location>
        <begin position="94"/>
        <end position="114"/>
    </location>
</feature>
<feature type="transmembrane region" description="Helical" evidence="2">
    <location>
        <begin position="146"/>
        <end position="166"/>
    </location>
</feature>
<feature type="transmembrane region" description="Helical" evidence="2">
    <location>
        <begin position="174"/>
        <end position="194"/>
    </location>
</feature>
<feature type="transmembrane region" description="Helical" evidence="2">
    <location>
        <begin position="195"/>
        <end position="215"/>
    </location>
</feature>
<feature type="transmembrane region" description="Helical" evidence="2">
    <location>
        <begin position="238"/>
        <end position="258"/>
    </location>
</feature>
<feature type="transmembrane region" description="Helical" evidence="2">
    <location>
        <begin position="274"/>
        <end position="294"/>
    </location>
</feature>
<feature type="transmembrane region" description="Helical" evidence="2">
    <location>
        <begin position="316"/>
        <end position="336"/>
    </location>
</feature>
<reference key="1">
    <citation type="journal article" date="1995" name="J. Mol. Evol.">
        <title>The sequence, organization, and evolution of the Locusta migratoria mitochondrial genome.</title>
        <authorList>
            <person name="Flook P.K."/>
            <person name="Rowell C.H.F."/>
            <person name="Gellissen G."/>
        </authorList>
    </citation>
    <scope>NUCLEOTIDE SEQUENCE [GENOMIC DNA]</scope>
</reference>
<name>NU2M_LOCMI</name>